<keyword id="KW-0002">3D-structure</keyword>
<keyword id="KW-0007">Acetylation</keyword>
<keyword id="KW-0963">Cytoplasm</keyword>
<keyword id="KW-0206">Cytoskeleton</keyword>
<keyword id="KW-0903">Direct protein sequencing</keyword>
<keyword id="KW-0225">Disease variant</keyword>
<keyword id="KW-0539">Nucleus</keyword>
<keyword id="KW-1267">Proteomics identification</keyword>
<keyword id="KW-1185">Reference proteome</keyword>
<keyword id="KW-0690">Ribosome biogenesis</keyword>
<feature type="initiator methionine" description="Removed" evidence="11 13 14">
    <location>
        <position position="1"/>
    </location>
</feature>
<feature type="chain" id="PRO_0000123762" description="Ribosome maturation protein SBDS">
    <location>
        <begin position="2"/>
        <end position="250"/>
    </location>
</feature>
<feature type="modified residue" description="N-acetylserine" evidence="11 13 14">
    <location>
        <position position="2"/>
    </location>
</feature>
<feature type="sequence variant" id="VAR_015390" description="In SDS1; uncertain significance; dbSNP:rs28942099." evidence="1">
    <original>N</original>
    <variation>K</variation>
    <location>
        <position position="8"/>
    </location>
</feature>
<feature type="sequence variant" id="VAR_071673" description="In SDS1; dbSNP:rs373730800." evidence="8">
    <original>K</original>
    <variation>T</variation>
    <location>
        <position position="33"/>
    </location>
</feature>
<feature type="sequence variant" id="VAR_015391" description="In SDS1; uncertain significance; dbSNP:rs1554341516." evidence="1">
    <original>E</original>
    <variation>G</variation>
    <location>
        <position position="44"/>
    </location>
</feature>
<feature type="sequence variant" id="VAR_015392" description="In SDS1; uncertain significance; dbSNP:rs1554341499." evidence="1">
    <original>K</original>
    <variation>E</variation>
    <location>
        <position position="67"/>
    </location>
</feature>
<feature type="sequence variant" id="VAR_015393" description="In SDS1; uncertain significance; dbSNP:rs1554341363." evidence="1">
    <original>I</original>
    <variation>S</variation>
    <location>
        <position position="87"/>
    </location>
</feature>
<feature type="sequence variant" id="VAR_015394" description="In SDS1; strongly reduced release of EIF6 from pre-60S ribosome subunits; dbSNP:rs113993995." evidence="1 7">
    <original>R</original>
    <variation>T</variation>
    <location>
        <position position="126"/>
    </location>
</feature>
<feature type="sequence variant" id="VAR_015395" description="In SDS1; uncertain significance; dbSNP:rs113993996." evidence="1">
    <original>R</original>
    <variation>C</variation>
    <location>
        <position position="169"/>
    </location>
</feature>
<feature type="sequence variant" id="VAR_015396" description="In dbSNP:rs79344818." evidence="1">
    <original>I</original>
    <variation>T</variation>
    <location>
        <position position="212"/>
    </location>
</feature>
<feature type="mutagenesis site" description="Strongly reduced release of EIF6 from pre-60S ribosome subunits." evidence="7">
    <original>K</original>
    <variation>N</variation>
    <location>
        <position position="151"/>
    </location>
</feature>
<feature type="sequence conflict" description="In Ref. 2; AAD34092." evidence="12" ref="2">
    <original>SGV</original>
    <variation>RAW</variation>
    <location>
        <begin position="41"/>
        <end position="43"/>
    </location>
</feature>
<feature type="sequence conflict" description="In Ref. 2; AAD34092." evidence="12" ref="2">
    <original>T</original>
    <variation>A</variation>
    <location>
        <position position="89"/>
    </location>
</feature>
<feature type="sequence conflict" description="In Ref. 2; AAD34092." evidence="12" ref="2">
    <original>E</original>
    <variation>G</variation>
    <location>
        <position position="105"/>
    </location>
</feature>
<feature type="sequence conflict" description="In Ref. 2; AAD34092." evidence="12" ref="2">
    <original>I</original>
    <variation>F</variation>
    <location>
        <position position="114"/>
    </location>
</feature>
<feature type="sequence conflict" description="In Ref. 2; AAD34092." evidence="12" ref="2">
    <original>R</original>
    <variation>G</variation>
    <location>
        <position position="126"/>
    </location>
</feature>
<feature type="sequence conflict" description="In Ref. 2; AAD34092." evidence="12" ref="2">
    <original>S</original>
    <variation>L</variation>
    <location>
        <position position="143"/>
    </location>
</feature>
<feature type="sequence conflict" description="In Ref. 2; AAD34092." evidence="12" ref="2">
    <original>T</original>
    <variation>P</variation>
    <location>
        <position position="146"/>
    </location>
</feature>
<feature type="turn" evidence="16">
    <location>
        <begin position="6"/>
        <end position="8"/>
    </location>
</feature>
<feature type="strand" evidence="17">
    <location>
        <begin position="15"/>
        <end position="21"/>
    </location>
</feature>
<feature type="strand" evidence="17">
    <location>
        <begin position="26"/>
        <end position="31"/>
    </location>
</feature>
<feature type="helix" evidence="17">
    <location>
        <begin position="35"/>
        <end position="41"/>
    </location>
</feature>
<feature type="helix" evidence="17">
    <location>
        <begin position="46"/>
        <end position="50"/>
    </location>
</feature>
<feature type="strand" evidence="16">
    <location>
        <begin position="51"/>
        <end position="55"/>
    </location>
</feature>
<feature type="strand" evidence="17">
    <location>
        <begin position="57"/>
        <end position="59"/>
    </location>
</feature>
<feature type="turn" evidence="17">
    <location>
        <begin position="60"/>
        <end position="63"/>
    </location>
</feature>
<feature type="strand" evidence="15">
    <location>
        <begin position="64"/>
        <end position="66"/>
    </location>
</feature>
<feature type="helix" evidence="17">
    <location>
        <begin position="68"/>
        <end position="75"/>
    </location>
</feature>
<feature type="helix" evidence="17">
    <location>
        <begin position="80"/>
        <end position="90"/>
    </location>
</feature>
<feature type="strand" evidence="17">
    <location>
        <begin position="91"/>
        <end position="94"/>
    </location>
</feature>
<feature type="helix" evidence="17">
    <location>
        <begin position="97"/>
        <end position="115"/>
    </location>
</feature>
<feature type="strand" evidence="17">
    <location>
        <begin position="116"/>
        <end position="118"/>
    </location>
</feature>
<feature type="strand" evidence="17">
    <location>
        <begin position="122"/>
        <end position="124"/>
    </location>
</feature>
<feature type="helix" evidence="17">
    <location>
        <begin position="130"/>
        <end position="140"/>
    </location>
</feature>
<feature type="strand" evidence="17">
    <location>
        <begin position="146"/>
        <end position="148"/>
    </location>
</feature>
<feature type="helix" evidence="17">
    <location>
        <begin position="150"/>
        <end position="164"/>
    </location>
</feature>
<feature type="strand" evidence="17">
    <location>
        <begin position="170"/>
        <end position="178"/>
    </location>
</feature>
<feature type="turn" evidence="17">
    <location>
        <begin position="180"/>
        <end position="182"/>
    </location>
</feature>
<feature type="helix" evidence="17">
    <location>
        <begin position="183"/>
        <end position="193"/>
    </location>
</feature>
<feature type="strand" evidence="17">
    <location>
        <begin position="194"/>
        <end position="200"/>
    </location>
</feature>
<feature type="strand" evidence="17">
    <location>
        <begin position="203"/>
        <end position="205"/>
    </location>
</feature>
<feature type="strand" evidence="17">
    <location>
        <begin position="207"/>
        <end position="214"/>
    </location>
</feature>
<feature type="turn" evidence="16">
    <location>
        <begin position="215"/>
        <end position="217"/>
    </location>
</feature>
<feature type="helix" evidence="17">
    <location>
        <begin position="218"/>
        <end position="229"/>
    </location>
</feature>
<feature type="strand" evidence="17">
    <location>
        <begin position="234"/>
        <end position="248"/>
    </location>
</feature>
<proteinExistence type="evidence at protein level"/>
<organism>
    <name type="scientific">Homo sapiens</name>
    <name type="common">Human</name>
    <dbReference type="NCBI Taxonomy" id="9606"/>
    <lineage>
        <taxon>Eukaryota</taxon>
        <taxon>Metazoa</taxon>
        <taxon>Chordata</taxon>
        <taxon>Craniata</taxon>
        <taxon>Vertebrata</taxon>
        <taxon>Euteleostomi</taxon>
        <taxon>Mammalia</taxon>
        <taxon>Eutheria</taxon>
        <taxon>Euarchontoglires</taxon>
        <taxon>Primates</taxon>
        <taxon>Haplorrhini</taxon>
        <taxon>Catarrhini</taxon>
        <taxon>Hominidae</taxon>
        <taxon>Homo</taxon>
    </lineage>
</organism>
<accession>Q9Y3A5</accession>
<accession>A8K0P4</accession>
<accession>Q96FX0</accession>
<accession>Q9NV53</accession>
<comment type="function">
    <text evidence="3 4 5 7">Required for the assembly of mature ribosomes and ribosome biogenesis. Together with EFL1, triggers the GTP-dependent release of EIF6 from 60S pre-ribosomes in the cytoplasm, thereby activating ribosomes for translation competence by allowing 80S ribosome assembly and facilitating EIF6 recycling to the nucleus, where it is required for 60S rRNA processing and nuclear export. Required for normal levels of protein synthesis. May play a role in cellular stress resistance. May play a role in cellular response to DNA damage. May play a role in cell proliferation.</text>
</comment>
<comment type="subunit">
    <text evidence="2 3 4 6 9 10">Associates with the 60S ribosomal subunit. Interacts with NPM1, RPA1 and PRKDC. May interact with NIP7 (PubMed:17643419). Found in a complex consisting of the 60S ribosomal subunit, SBDS and EFL1 (PubMed:26479198). Interacts with EFL1 (PubMed:25991726). Interacts with CLN3 (PubMed:20015955).</text>
</comment>
<comment type="interaction">
    <interactant intactId="EBI-1046471">
        <id>Q9Y3A5</id>
    </interactant>
    <interactant intactId="EBI-717666">
        <id>Q96AP0</id>
        <label>ACD</label>
    </interactant>
    <organismsDiffer>false</organismsDiffer>
    <experiments>2</experiments>
</comment>
<comment type="interaction">
    <interactant intactId="EBI-1046471">
        <id>Q9Y3A5</id>
    </interactant>
    <interactant intactId="EBI-2870376">
        <id>Q7Z2Z2</id>
        <label>EFL1</label>
    </interactant>
    <organismsDiffer>false</organismsDiffer>
    <experiments>2</experiments>
</comment>
<comment type="interaction">
    <interactant intactId="EBI-1046471">
        <id>Q9Y3A5</id>
    </interactant>
    <interactant intactId="EBI-6426464">
        <id>Q8WZ60</id>
        <label>KLHL6</label>
    </interactant>
    <organismsDiffer>false</organismsDiffer>
    <experiments>3</experiments>
</comment>
<comment type="subcellular location">
    <subcellularLocation>
        <location>Cytoplasm</location>
    </subcellularLocation>
    <subcellularLocation>
        <location>Nucleus</location>
        <location>Nucleolus</location>
    </subcellularLocation>
    <subcellularLocation>
        <location>Nucleus</location>
        <location>Nucleoplasm</location>
    </subcellularLocation>
    <subcellularLocation>
        <location>Cytoplasm</location>
        <location>Cytoskeleton</location>
        <location>Spindle</location>
    </subcellularLocation>
    <text evidence="5">Primarily detected in the cytoplasm, and at low levels in nucleus and nucleolus (PubMed:17475909, PubMed:19602484). Detected in the nucleolus during G1 and G2 phase of the cell cycle, and diffusely distributed in the nucleus during S phase. Detected at the mitotic spindle. Colocalizes with the microtubule organizing center during interphase (PubMed:19759903).</text>
</comment>
<comment type="tissue specificity">
    <text>Widely expressed.</text>
</comment>
<comment type="disease" evidence="1 7 8">
    <disease id="DI-02303">
        <name>Shwachman-Diamond syndrome 1</name>
        <acronym>SDS1</acronym>
        <description>A form of Shwachman-Diamond syndrome, a disorder characterized by hematopoietic abnormalities, exocrine pancreatic dysfunction, and skeletal dysplasia. Intermittent or chronic neutropenia is the most common hematological manifestation, followed by anemia and thrombocytopenia. Some patients progress to bone marrow failure, myelodysplastic syndrome and malignant transformation, with acute myelogenous leukemia being the most common. Exocrine pancreatic dysfunction is generally the first presenting symptom in infancy. Short stature and metaphyseal dysplasia are the most frequent skeletal manifestations. SDS1 inheritance is autosomal recessive.</description>
        <dbReference type="MIM" id="260400"/>
    </disease>
    <text>The disease is caused by variants affecting the gene represented in this entry.</text>
</comment>
<comment type="similarity">
    <text evidence="12">Belongs to the SDO1/SBDS family.</text>
</comment>
<comment type="online information" name="SBDSbase">
    <link uri="https://databases.lovd.nl/shared/genes/SBDS"/>
    <text>SBDS mutation db</text>
</comment>
<sequence length="250" mass="28764">MSIFTPTNQIRLTNVAVVRMKRAGKRFEIACYKNKVVGWRSGVEKDLDEVLQTHSVFVNVSKGQVAKKEDLISAFGTDDQTEICKQILTKGEVQVSDKERHTQLEQMFRDIATIVADKCVNPETKRPYTVILIERAMKDIHYSVKTNKSTKQQALEVIKQLKEKMKIERAHMRLRFILPVNEGKKLKEKLKPLIKVIESEDYGQQLEIVCLIDPGCFREIDELIKKETKGKGSLEVLNLKDVEEGDEKFE</sequence>
<reference key="1">
    <citation type="journal article" date="2003" name="Nat. Genet.">
        <title>Mutations in SBDS are associated with Shwachman-Diamond syndrome.</title>
        <authorList>
            <person name="Boocock G.R.B."/>
            <person name="Morrison J.A."/>
            <person name="Popovic M."/>
            <person name="Richards N."/>
            <person name="Ellis L."/>
            <person name="Durie P.R."/>
            <person name="Rommens J.M."/>
        </authorList>
    </citation>
    <scope>NUCLEOTIDE SEQUENCE [MRNA]</scope>
    <scope>VARIANTS SDS1 LYS-8; GLY-44; GLU-67; SER-87; THR-126 AND CYS-169</scope>
    <scope>VARIANT THR-212</scope>
</reference>
<reference key="2">
    <citation type="journal article" date="2000" name="Genome Res.">
        <title>Identification of novel human genes evolutionarily conserved in Caenorhabditis elegans by comparative proteomics.</title>
        <authorList>
            <person name="Lai C.-H."/>
            <person name="Chou C.-Y."/>
            <person name="Ch'ang L.-Y."/>
            <person name="Liu C.-S."/>
            <person name="Lin W.-C."/>
        </authorList>
    </citation>
    <scope>NUCLEOTIDE SEQUENCE [LARGE SCALE MRNA]</scope>
</reference>
<reference key="3">
    <citation type="journal article" date="2004" name="Nat. Genet.">
        <title>Complete sequencing and characterization of 21,243 full-length human cDNAs.</title>
        <authorList>
            <person name="Ota T."/>
            <person name="Suzuki Y."/>
            <person name="Nishikawa T."/>
            <person name="Otsuki T."/>
            <person name="Sugiyama T."/>
            <person name="Irie R."/>
            <person name="Wakamatsu A."/>
            <person name="Hayashi K."/>
            <person name="Sato H."/>
            <person name="Nagai K."/>
            <person name="Kimura K."/>
            <person name="Makita H."/>
            <person name="Sekine M."/>
            <person name="Obayashi M."/>
            <person name="Nishi T."/>
            <person name="Shibahara T."/>
            <person name="Tanaka T."/>
            <person name="Ishii S."/>
            <person name="Yamamoto J."/>
            <person name="Saito K."/>
            <person name="Kawai Y."/>
            <person name="Isono Y."/>
            <person name="Nakamura Y."/>
            <person name="Nagahari K."/>
            <person name="Murakami K."/>
            <person name="Yasuda T."/>
            <person name="Iwayanagi T."/>
            <person name="Wagatsuma M."/>
            <person name="Shiratori A."/>
            <person name="Sudo H."/>
            <person name="Hosoiri T."/>
            <person name="Kaku Y."/>
            <person name="Kodaira H."/>
            <person name="Kondo H."/>
            <person name="Sugawara M."/>
            <person name="Takahashi M."/>
            <person name="Kanda K."/>
            <person name="Yokoi T."/>
            <person name="Furuya T."/>
            <person name="Kikkawa E."/>
            <person name="Omura Y."/>
            <person name="Abe K."/>
            <person name="Kamihara K."/>
            <person name="Katsuta N."/>
            <person name="Sato K."/>
            <person name="Tanikawa M."/>
            <person name="Yamazaki M."/>
            <person name="Ninomiya K."/>
            <person name="Ishibashi T."/>
            <person name="Yamashita H."/>
            <person name="Murakawa K."/>
            <person name="Fujimori K."/>
            <person name="Tanai H."/>
            <person name="Kimata M."/>
            <person name="Watanabe M."/>
            <person name="Hiraoka S."/>
            <person name="Chiba Y."/>
            <person name="Ishida S."/>
            <person name="Ono Y."/>
            <person name="Takiguchi S."/>
            <person name="Watanabe S."/>
            <person name="Yosida M."/>
            <person name="Hotuta T."/>
            <person name="Kusano J."/>
            <person name="Kanehori K."/>
            <person name="Takahashi-Fujii A."/>
            <person name="Hara H."/>
            <person name="Tanase T.-O."/>
            <person name="Nomura Y."/>
            <person name="Togiya S."/>
            <person name="Komai F."/>
            <person name="Hara R."/>
            <person name="Takeuchi K."/>
            <person name="Arita M."/>
            <person name="Imose N."/>
            <person name="Musashino K."/>
            <person name="Yuuki H."/>
            <person name="Oshima A."/>
            <person name="Sasaki N."/>
            <person name="Aotsuka S."/>
            <person name="Yoshikawa Y."/>
            <person name="Matsunawa H."/>
            <person name="Ichihara T."/>
            <person name="Shiohata N."/>
            <person name="Sano S."/>
            <person name="Moriya S."/>
            <person name="Momiyama H."/>
            <person name="Satoh N."/>
            <person name="Takami S."/>
            <person name="Terashima Y."/>
            <person name="Suzuki O."/>
            <person name="Nakagawa S."/>
            <person name="Senoh A."/>
            <person name="Mizoguchi H."/>
            <person name="Goto Y."/>
            <person name="Shimizu F."/>
            <person name="Wakebe H."/>
            <person name="Hishigaki H."/>
            <person name="Watanabe T."/>
            <person name="Sugiyama A."/>
            <person name="Takemoto M."/>
            <person name="Kawakami B."/>
            <person name="Yamazaki M."/>
            <person name="Watanabe K."/>
            <person name="Kumagai A."/>
            <person name="Itakura S."/>
            <person name="Fukuzumi Y."/>
            <person name="Fujimori Y."/>
            <person name="Komiyama M."/>
            <person name="Tashiro H."/>
            <person name="Tanigami A."/>
            <person name="Fujiwara T."/>
            <person name="Ono T."/>
            <person name="Yamada K."/>
            <person name="Fujii Y."/>
            <person name="Ozaki K."/>
            <person name="Hirao M."/>
            <person name="Ohmori Y."/>
            <person name="Kawabata A."/>
            <person name="Hikiji T."/>
            <person name="Kobatake N."/>
            <person name="Inagaki H."/>
            <person name="Ikema Y."/>
            <person name="Okamoto S."/>
            <person name="Okitani R."/>
            <person name="Kawakami T."/>
            <person name="Noguchi S."/>
            <person name="Itoh T."/>
            <person name="Shigeta K."/>
            <person name="Senba T."/>
            <person name="Matsumura K."/>
            <person name="Nakajima Y."/>
            <person name="Mizuno T."/>
            <person name="Morinaga M."/>
            <person name="Sasaki M."/>
            <person name="Togashi T."/>
            <person name="Oyama M."/>
            <person name="Hata H."/>
            <person name="Watanabe M."/>
            <person name="Komatsu T."/>
            <person name="Mizushima-Sugano J."/>
            <person name="Satoh T."/>
            <person name="Shirai Y."/>
            <person name="Takahashi Y."/>
            <person name="Nakagawa K."/>
            <person name="Okumura K."/>
            <person name="Nagase T."/>
            <person name="Nomura N."/>
            <person name="Kikuchi H."/>
            <person name="Masuho Y."/>
            <person name="Yamashita R."/>
            <person name="Nakai K."/>
            <person name="Yada T."/>
            <person name="Nakamura Y."/>
            <person name="Ohara O."/>
            <person name="Isogai T."/>
            <person name="Sugano S."/>
        </authorList>
    </citation>
    <scope>NUCLEOTIDE SEQUENCE [LARGE SCALE MRNA]</scope>
    <source>
        <tissue>Brain cortex</tissue>
        <tissue>Ovarian carcinoma</tissue>
    </source>
</reference>
<reference key="4">
    <citation type="submission" date="2005-07" db="EMBL/GenBank/DDBJ databases">
        <authorList>
            <person name="Mural R.J."/>
            <person name="Istrail S."/>
            <person name="Sutton G.G."/>
            <person name="Florea L."/>
            <person name="Halpern A.L."/>
            <person name="Mobarry C.M."/>
            <person name="Lippert R."/>
            <person name="Walenz B."/>
            <person name="Shatkay H."/>
            <person name="Dew I."/>
            <person name="Miller J.R."/>
            <person name="Flanigan M.J."/>
            <person name="Edwards N.J."/>
            <person name="Bolanos R."/>
            <person name="Fasulo D."/>
            <person name="Halldorsson B.V."/>
            <person name="Hannenhalli S."/>
            <person name="Turner R."/>
            <person name="Yooseph S."/>
            <person name="Lu F."/>
            <person name="Nusskern D.R."/>
            <person name="Shue B.C."/>
            <person name="Zheng X.H."/>
            <person name="Zhong F."/>
            <person name="Delcher A.L."/>
            <person name="Huson D.H."/>
            <person name="Kravitz S.A."/>
            <person name="Mouchard L."/>
            <person name="Reinert K."/>
            <person name="Remington K.A."/>
            <person name="Clark A.G."/>
            <person name="Waterman M.S."/>
            <person name="Eichler E.E."/>
            <person name="Adams M.D."/>
            <person name="Hunkapiller M.W."/>
            <person name="Myers E.W."/>
            <person name="Venter J.C."/>
        </authorList>
    </citation>
    <scope>NUCLEOTIDE SEQUENCE [LARGE SCALE GENOMIC DNA]</scope>
</reference>
<reference key="5">
    <citation type="journal article" date="2004" name="Genome Res.">
        <title>The status, quality, and expansion of the NIH full-length cDNA project: the Mammalian Gene Collection (MGC).</title>
        <authorList>
            <consortium name="The MGC Project Team"/>
        </authorList>
    </citation>
    <scope>NUCLEOTIDE SEQUENCE [LARGE SCALE MRNA]</scope>
    <source>
        <tissue>PNS</tissue>
    </source>
</reference>
<reference key="6">
    <citation type="submission" date="2005-11" db="UniProtKB">
        <authorList>
            <person name="Bienvenut W.V."/>
            <person name="Claeys D."/>
        </authorList>
    </citation>
    <scope>PROTEIN SEQUENCE OF 2-19</scope>
    <scope>CLEAVAGE OF INITIATOR METHIONINE</scope>
    <scope>ACETYLATION AT SER-2</scope>
    <scope>IDENTIFICATION BY MASS SPECTROMETRY</scope>
    <source>
        <tissue>Platelet</tissue>
    </source>
</reference>
<reference key="7">
    <citation type="journal article" date="2005" name="Blood">
        <title>The Shwachman-Diamond SBDS protein localizes to the nucleolus.</title>
        <authorList>
            <person name="Austin K.M."/>
            <person name="Leary R.J."/>
            <person name="Shimamura A."/>
        </authorList>
    </citation>
    <scope>SUBCELLULAR LOCATION</scope>
</reference>
<reference key="8">
    <citation type="journal article" date="2007" name="Blood">
        <title>The human Shwachman-Diamond syndrome protein, SBDS, associates with ribosomal RNA.</title>
        <authorList>
            <person name="Ganapathi K.A."/>
            <person name="Austin K.M."/>
            <person name="Lee C.S."/>
            <person name="Dias A."/>
            <person name="Malsch M.M."/>
            <person name="Reed R."/>
            <person name="Shimamura A."/>
        </authorList>
    </citation>
    <scope>INTERACTION WITH NPM1 AND THE 60S RIBOSOMAL SUBUNIT</scope>
    <scope>SUBCELLULAR LOCATION</scope>
</reference>
<reference key="9">
    <citation type="journal article" date="2007" name="Exp. Cell Res.">
        <title>The Shwachman-Bodian-Diamond syndrome associated protein interacts with HsNip7 and its down-regulation affects gene expression at the transcriptional and translational levels.</title>
        <authorList>
            <person name="Hesling C."/>
            <person name="Oliveira C.C."/>
            <person name="Castilho B.A."/>
            <person name="Zanchin N.I."/>
        </authorList>
    </citation>
    <scope>FUNCTION</scope>
    <scope>INTERACTION WITH NIP7</scope>
</reference>
<reference key="10">
    <citation type="journal article" date="2009" name="Hum. Mol. Genet.">
        <title>Shwachman-Bodian Diamond syndrome is a multi-functional protein implicated in cellular stress responses.</title>
        <authorList>
            <person name="Ball H.L."/>
            <person name="Zhang B."/>
            <person name="Riches J.J."/>
            <person name="Gandhi R."/>
            <person name="Li J."/>
            <person name="Rommens J.M."/>
            <person name="Myers J.S."/>
        </authorList>
    </citation>
    <scope>FUNCTION</scope>
    <scope>SUBCELLULAR LOCATION</scope>
    <scope>INTERACTION WITH RPA1; PRKDC AND THE 60S RIBOSOME SUBUNIT</scope>
</reference>
<reference key="11">
    <citation type="journal article" date="2009" name="PLoS ONE">
        <title>SBDS expression and localization at the mitotic spindle in human myeloid progenitors.</title>
        <authorList>
            <person name="Orelio C."/>
            <person name="Verkuijlen P."/>
            <person name="Geissler J."/>
            <person name="van den Berg T.K."/>
            <person name="Kuijpers T.W."/>
        </authorList>
    </citation>
    <scope>FUNCTION</scope>
    <scope>SUBCELLULAR LOCATION</scope>
</reference>
<reference key="12">
    <citation type="journal article" date="2010" name="Hum. Mol. Genet.">
        <title>Interaction between Sdo1p and Btn1p in the Saccharomyces cerevisiae model for Batten disease.</title>
        <authorList>
            <person name="Vitiello S.P."/>
            <person name="Benedict J.W."/>
            <person name="Padilla-Lopez S."/>
            <person name="Pearce D.A."/>
        </authorList>
    </citation>
    <scope>INTERACTION WITH CLN3</scope>
</reference>
<reference key="13">
    <citation type="journal article" date="2011" name="BMC Syst. Biol.">
        <title>Initial characterization of the human central proteome.</title>
        <authorList>
            <person name="Burkard T.R."/>
            <person name="Planyavsky M."/>
            <person name="Kaupe I."/>
            <person name="Breitwieser F.P."/>
            <person name="Buerckstuemmer T."/>
            <person name="Bennett K.L."/>
            <person name="Superti-Furga G."/>
            <person name="Colinge J."/>
        </authorList>
    </citation>
    <scope>IDENTIFICATION BY MASS SPECTROMETRY [LARGE SCALE ANALYSIS]</scope>
</reference>
<reference key="14">
    <citation type="journal article" date="2012" name="Mol. Cell. Proteomics">
        <title>Comparative large-scale characterisation of plant vs. mammal proteins reveals similar and idiosyncratic N-alpha acetylation features.</title>
        <authorList>
            <person name="Bienvenut W.V."/>
            <person name="Sumpton D."/>
            <person name="Martinez A."/>
            <person name="Lilla S."/>
            <person name="Espagne C."/>
            <person name="Meinnel T."/>
            <person name="Giglione C."/>
        </authorList>
    </citation>
    <scope>ACETYLATION [LARGE SCALE ANALYSIS] AT SER-2</scope>
    <scope>CLEAVAGE OF INITIATOR METHIONINE [LARGE SCALE ANALYSIS]</scope>
    <scope>IDENTIFICATION BY MASS SPECTROMETRY [LARGE SCALE ANALYSIS]</scope>
</reference>
<reference key="15">
    <citation type="journal article" date="2012" name="Proc. Natl. Acad. Sci. U.S.A.">
        <title>N-terminal acetylome analyses and functional insights of the N-terminal acetyltransferase NatB.</title>
        <authorList>
            <person name="Van Damme P."/>
            <person name="Lasa M."/>
            <person name="Polevoda B."/>
            <person name="Gazquez C."/>
            <person name="Elosegui-Artola A."/>
            <person name="Kim D.S."/>
            <person name="De Juan-Pardo E."/>
            <person name="Demeyer K."/>
            <person name="Hole K."/>
            <person name="Larrea E."/>
            <person name="Timmerman E."/>
            <person name="Prieto J."/>
            <person name="Arnesen T."/>
            <person name="Sherman F."/>
            <person name="Gevaert K."/>
            <person name="Aldabe R."/>
        </authorList>
    </citation>
    <scope>ACETYLATION [LARGE SCALE ANALYSIS] AT SER-2</scope>
    <scope>CLEAVAGE OF INITIATOR METHIONINE [LARGE SCALE ANALYSIS]</scope>
    <scope>IDENTIFICATION BY MASS SPECTROMETRY [LARGE SCALE ANALYSIS]</scope>
</reference>
<reference key="16">
    <citation type="journal article" date="2014" name="J. Proteomics">
        <title>An enzyme assisted RP-RPLC approach for in-depth analysis of human liver phosphoproteome.</title>
        <authorList>
            <person name="Bian Y."/>
            <person name="Song C."/>
            <person name="Cheng K."/>
            <person name="Dong M."/>
            <person name="Wang F."/>
            <person name="Huang J."/>
            <person name="Sun D."/>
            <person name="Wang L."/>
            <person name="Ye M."/>
            <person name="Zou H."/>
        </authorList>
    </citation>
    <scope>IDENTIFICATION BY MASS SPECTROMETRY [LARGE SCALE ANALYSIS]</scope>
    <source>
        <tissue>Liver</tissue>
    </source>
</reference>
<reference key="17">
    <citation type="journal article" date="2015" name="J. Biol. Chem.">
        <title>Defective guanine nucleotide exchange in the elongation factor-like 1 (EFL1) GTPase by mutations in the Shwachman-Diamond syndrome protein.</title>
        <authorList>
            <person name="Garcia-Marquez A."/>
            <person name="Gijsbers A."/>
            <person name="de la Mora E."/>
            <person name="Sanchez-Puig N."/>
        </authorList>
    </citation>
    <scope>INTERACTION WITH EFL1</scope>
</reference>
<reference key="18">
    <citation type="journal article" date="2015" name="Proteomics">
        <title>N-terminome analysis of the human mitochondrial proteome.</title>
        <authorList>
            <person name="Vaca Jacome A.S."/>
            <person name="Rabilloud T."/>
            <person name="Schaeffer-Reiss C."/>
            <person name="Rompais M."/>
            <person name="Ayoub D."/>
            <person name="Lane L."/>
            <person name="Bairoch A."/>
            <person name="Van Dorsselaer A."/>
            <person name="Carapito C."/>
        </authorList>
    </citation>
    <scope>IDENTIFICATION BY MASS SPECTROMETRY [LARGE SCALE ANALYSIS]</scope>
</reference>
<reference key="19">
    <citation type="journal article" date="2010" name="J. Mol. Biol.">
        <title>Structure, dynamics, and RNA interaction analysis of the human SBDS protein.</title>
        <authorList>
            <person name="de Oliveira J.F."/>
            <person name="Sforca M.L."/>
            <person name="Blumenschein T.M."/>
            <person name="Goldfeder M.B."/>
            <person name="Guimaraes B.G."/>
            <person name="Oliveira C.C."/>
            <person name="Zanchin N.I."/>
            <person name="Zeri A.C."/>
        </authorList>
    </citation>
    <scope>STRUCTURE BY NMR</scope>
    <scope>RNA-BINDING</scope>
</reference>
<reference key="20">
    <citation type="journal article" date="2011" name="Genes Dev.">
        <title>Uncoupling of GTP hydrolysis from eIF6 release on the ribosome causes Shwachman-Diamond syndrome.</title>
        <authorList>
            <person name="Finch A.J."/>
            <person name="Hilcenko C."/>
            <person name="Basse N."/>
            <person name="Drynan L.F."/>
            <person name="Goyenechea B."/>
            <person name="Menne T.F."/>
            <person name="Gonzalez Fernandez A."/>
            <person name="Simpson P."/>
            <person name="D'Santos C.S."/>
            <person name="Arends M.J."/>
            <person name="Donadieu J."/>
            <person name="Bellanne-Chantelot C."/>
            <person name="Costanzo M."/>
            <person name="Boone C."/>
            <person name="McKenzie A.N."/>
            <person name="Freund S.M."/>
            <person name="Warren A.J."/>
        </authorList>
    </citation>
    <scope>STRUCTURE BY NMR</scope>
    <scope>FUNCTION</scope>
    <scope>CHARACTERIZATION OF VARIANT SDS1 THR-126</scope>
    <scope>MUTAGENESIS OF LYS-151</scope>
</reference>
<reference key="21">
    <citation type="journal article" date="2015" name="Nat. Struct. Mol. Biol.">
        <title>Mechanism of eIF6 release from the nascent 60S ribosomal subunit.</title>
        <authorList>
            <person name="Weis F."/>
            <person name="Giudice E."/>
            <person name="Churcher M."/>
            <person name="Jin L."/>
            <person name="Hilcenko C."/>
            <person name="Wong C.C."/>
            <person name="Traynor D."/>
            <person name="Kay R.R."/>
            <person name="Warren A.J."/>
        </authorList>
    </citation>
    <scope>STRUCTURE BY ELECTRON MICROSCOPY (3.30 ANGSTROMS)</scope>
    <scope>IDENTIFICATION IN A COMPLEX WITH SBDS; 60S RIBOSOMAL SUBUNIT AND EFL1</scope>
</reference>
<reference key="22">
    <citation type="journal article" date="2014" name="BMC Med. Genet.">
        <title>Structural variation and missense mutation in SBDS associated with Shwachman-Diamond syndrome.</title>
        <authorList>
            <person name="Carvalho C.M."/>
            <person name="Zuccherato L.W."/>
            <person name="Williams C.L."/>
            <person name="Neill N.J."/>
            <person name="Murdock D.R."/>
            <person name="Bainbridge M."/>
            <person name="Jhangiani S.N."/>
            <person name="Muzny D.M."/>
            <person name="Gibbs R.A."/>
            <person name="Ip W."/>
            <person name="Guillerman R.P."/>
            <person name="Lupski J.R."/>
            <person name="Bertuch A.A."/>
        </authorList>
    </citation>
    <scope>VARIANT SDS1 THR-33</scope>
</reference>
<protein>
    <recommendedName>
        <fullName>Ribosome maturation protein SBDS</fullName>
    </recommendedName>
    <alternativeName>
        <fullName>Shwachman-Bodian-Diamond syndrome protein</fullName>
    </alternativeName>
</protein>
<gene>
    <name type="primary">SBDS</name>
    <name type="ORF">CGI-97</name>
</gene>
<name>SBDS_HUMAN</name>
<dbReference type="EMBL" id="AY169963">
    <property type="protein sequence ID" value="AAN77490.1"/>
    <property type="molecule type" value="mRNA"/>
</dbReference>
<dbReference type="EMBL" id="AF151855">
    <property type="protein sequence ID" value="AAD34092.1"/>
    <property type="molecule type" value="mRNA"/>
</dbReference>
<dbReference type="EMBL" id="AK001779">
    <property type="protein sequence ID" value="BAA91905.1"/>
    <property type="molecule type" value="mRNA"/>
</dbReference>
<dbReference type="EMBL" id="AK289609">
    <property type="protein sequence ID" value="BAF82298.1"/>
    <property type="molecule type" value="mRNA"/>
</dbReference>
<dbReference type="EMBL" id="CH471140">
    <property type="protein sequence ID" value="EAX07906.1"/>
    <property type="molecule type" value="Genomic_DNA"/>
</dbReference>
<dbReference type="EMBL" id="BC065700">
    <property type="protein sequence ID" value="AAH65700.1"/>
    <property type="molecule type" value="mRNA"/>
</dbReference>
<dbReference type="CCDS" id="CCDS5537.1"/>
<dbReference type="RefSeq" id="NP_057122.2">
    <property type="nucleotide sequence ID" value="NM_016038.3"/>
</dbReference>
<dbReference type="PDB" id="2KDO">
    <property type="method" value="NMR"/>
    <property type="chains" value="A=1-250"/>
</dbReference>
<dbReference type="PDB" id="2L9N">
    <property type="method" value="NMR"/>
    <property type="chains" value="A=1-250"/>
</dbReference>
<dbReference type="PDB" id="5AN9">
    <property type="method" value="EM"/>
    <property type="resolution" value="3.30 A"/>
    <property type="chains" value="J=1-250"/>
</dbReference>
<dbReference type="PDB" id="5ANB">
    <property type="method" value="EM"/>
    <property type="resolution" value="4.10 A"/>
    <property type="chains" value="J=1-250"/>
</dbReference>
<dbReference type="PDB" id="5ANC">
    <property type="method" value="EM"/>
    <property type="resolution" value="4.20 A"/>
    <property type="chains" value="J=1-250"/>
</dbReference>
<dbReference type="PDB" id="6QKL">
    <property type="method" value="EM"/>
    <property type="resolution" value="3.30 A"/>
    <property type="chains" value="J=1-250"/>
</dbReference>
<dbReference type="PDBsum" id="2KDO"/>
<dbReference type="PDBsum" id="2L9N"/>
<dbReference type="PDBsum" id="5AN9"/>
<dbReference type="PDBsum" id="5ANB"/>
<dbReference type="PDBsum" id="5ANC"/>
<dbReference type="PDBsum" id="6QKL"/>
<dbReference type="BMRB" id="Q9Y3A5"/>
<dbReference type="EMDB" id="EMD-3145"/>
<dbReference type="EMDB" id="EMD-3146"/>
<dbReference type="EMDB" id="EMD-3147"/>
<dbReference type="SMR" id="Q9Y3A5"/>
<dbReference type="BioGRID" id="119307">
    <property type="interactions" value="188"/>
</dbReference>
<dbReference type="FunCoup" id="Q9Y3A5">
    <property type="interactions" value="3365"/>
</dbReference>
<dbReference type="IntAct" id="Q9Y3A5">
    <property type="interactions" value="894"/>
</dbReference>
<dbReference type="MINT" id="Q9Y3A5"/>
<dbReference type="STRING" id="9606.ENSP00000246868"/>
<dbReference type="GlyGen" id="Q9Y3A5">
    <property type="glycosylation" value="1 site, 1 O-linked glycan (1 site)"/>
</dbReference>
<dbReference type="iPTMnet" id="Q9Y3A5"/>
<dbReference type="PhosphoSitePlus" id="Q9Y3A5"/>
<dbReference type="BioMuta" id="SBDS"/>
<dbReference type="DMDM" id="28380824"/>
<dbReference type="jPOST" id="Q9Y3A5"/>
<dbReference type="MassIVE" id="Q9Y3A5"/>
<dbReference type="PaxDb" id="9606-ENSP00000246868"/>
<dbReference type="PeptideAtlas" id="Q9Y3A5"/>
<dbReference type="ProteomicsDB" id="85997"/>
<dbReference type="Pumba" id="Q9Y3A5"/>
<dbReference type="Antibodypedia" id="14141">
    <property type="antibodies" value="237 antibodies from 32 providers"/>
</dbReference>
<dbReference type="DNASU" id="51119"/>
<dbReference type="Ensembl" id="ENST00000246868.7">
    <property type="protein sequence ID" value="ENSP00000246868.2"/>
    <property type="gene ID" value="ENSG00000126524.12"/>
</dbReference>
<dbReference type="Ensembl" id="ENST00000697897.1">
    <property type="protein sequence ID" value="ENSP00000513469.1"/>
    <property type="gene ID" value="ENSG00000126524.12"/>
</dbReference>
<dbReference type="GeneID" id="51119"/>
<dbReference type="KEGG" id="hsa:51119"/>
<dbReference type="MANE-Select" id="ENST00000246868.7">
    <property type="protein sequence ID" value="ENSP00000246868.2"/>
    <property type="RefSeq nucleotide sequence ID" value="NM_016038.4"/>
    <property type="RefSeq protein sequence ID" value="NP_057122.2"/>
</dbReference>
<dbReference type="UCSC" id="uc003tvm.2">
    <property type="organism name" value="human"/>
</dbReference>
<dbReference type="AGR" id="HGNC:19440"/>
<dbReference type="CTD" id="51119"/>
<dbReference type="DisGeNET" id="51119"/>
<dbReference type="GeneCards" id="SBDS"/>
<dbReference type="GeneReviews" id="SBDS"/>
<dbReference type="HGNC" id="HGNC:19440">
    <property type="gene designation" value="SBDS"/>
</dbReference>
<dbReference type="HPA" id="ENSG00000126524">
    <property type="expression patterns" value="Low tissue specificity"/>
</dbReference>
<dbReference type="MalaCards" id="SBDS"/>
<dbReference type="MIM" id="260400">
    <property type="type" value="phenotype"/>
</dbReference>
<dbReference type="MIM" id="607444">
    <property type="type" value="gene"/>
</dbReference>
<dbReference type="neXtProt" id="NX_Q9Y3A5"/>
<dbReference type="OpenTargets" id="ENSG00000126524"/>
<dbReference type="Orphanet" id="88">
    <property type="disease" value="Idiopathic aplastic anemia"/>
</dbReference>
<dbReference type="Orphanet" id="622934">
    <property type="disease" value="SBDS-related severe neonatal spondylometaphyseal dysplasia"/>
</dbReference>
<dbReference type="Orphanet" id="811">
    <property type="disease" value="Shwachman-Diamond syndrome"/>
</dbReference>
<dbReference type="PharmGKB" id="PA134978742"/>
<dbReference type="VEuPathDB" id="HostDB:ENSG00000126524"/>
<dbReference type="eggNOG" id="KOG2917">
    <property type="taxonomic scope" value="Eukaryota"/>
</dbReference>
<dbReference type="GeneTree" id="ENSGT00390000008135"/>
<dbReference type="HOGENOM" id="CLU_043216_1_1_1"/>
<dbReference type="InParanoid" id="Q9Y3A5"/>
<dbReference type="OrthoDB" id="10253092at2759"/>
<dbReference type="PAN-GO" id="Q9Y3A5">
    <property type="GO annotations" value="0 GO annotations based on evolutionary models"/>
</dbReference>
<dbReference type="PhylomeDB" id="Q9Y3A5"/>
<dbReference type="TreeFam" id="TF300881"/>
<dbReference type="PathwayCommons" id="Q9Y3A5"/>
<dbReference type="SignaLink" id="Q9Y3A5"/>
<dbReference type="SIGNOR" id="Q9Y3A5"/>
<dbReference type="BioGRID-ORCS" id="51119">
    <property type="hits" value="771 hits in 1140 CRISPR screens"/>
</dbReference>
<dbReference type="CD-CODE" id="91857CE7">
    <property type="entry name" value="Nucleolus"/>
</dbReference>
<dbReference type="ChiTaRS" id="SBDS">
    <property type="organism name" value="human"/>
</dbReference>
<dbReference type="EvolutionaryTrace" id="Q9Y3A5"/>
<dbReference type="GeneWiki" id="SBDS"/>
<dbReference type="GenomeRNAi" id="51119"/>
<dbReference type="Pharos" id="Q9Y3A5">
    <property type="development level" value="Tbio"/>
</dbReference>
<dbReference type="PRO" id="PR:Q9Y3A5"/>
<dbReference type="Proteomes" id="UP000005640">
    <property type="component" value="Chromosome 7"/>
</dbReference>
<dbReference type="RNAct" id="Q9Y3A5">
    <property type="molecule type" value="protein"/>
</dbReference>
<dbReference type="Bgee" id="ENSG00000126524">
    <property type="expression patterns" value="Expressed in popliteal artery and 104 other cell types or tissues"/>
</dbReference>
<dbReference type="ExpressionAtlas" id="Q9Y3A5">
    <property type="expression patterns" value="baseline and differential"/>
</dbReference>
<dbReference type="GO" id="GO:0005737">
    <property type="term" value="C:cytoplasm"/>
    <property type="evidence" value="ECO:0000314"/>
    <property type="project" value="UniProtKB"/>
</dbReference>
<dbReference type="GO" id="GO:0005829">
    <property type="term" value="C:cytosol"/>
    <property type="evidence" value="ECO:0000314"/>
    <property type="project" value="HPA"/>
</dbReference>
<dbReference type="GO" id="GO:0005730">
    <property type="term" value="C:nucleolus"/>
    <property type="evidence" value="ECO:0000314"/>
    <property type="project" value="UniProtKB"/>
</dbReference>
<dbReference type="GO" id="GO:0005654">
    <property type="term" value="C:nucleoplasm"/>
    <property type="evidence" value="ECO:0000314"/>
    <property type="project" value="HPA"/>
</dbReference>
<dbReference type="GO" id="GO:0005634">
    <property type="term" value="C:nucleus"/>
    <property type="evidence" value="ECO:0000314"/>
    <property type="project" value="UniProtKB"/>
</dbReference>
<dbReference type="GO" id="GO:0000922">
    <property type="term" value="C:spindle pole"/>
    <property type="evidence" value="ECO:0000314"/>
    <property type="project" value="UniProtKB"/>
</dbReference>
<dbReference type="GO" id="GO:0008017">
    <property type="term" value="F:microtubule binding"/>
    <property type="evidence" value="ECO:0000314"/>
    <property type="project" value="UniProtKB"/>
</dbReference>
<dbReference type="GO" id="GO:0043022">
    <property type="term" value="F:ribosome binding"/>
    <property type="evidence" value="ECO:0000314"/>
    <property type="project" value="UniProtKB"/>
</dbReference>
<dbReference type="GO" id="GO:0003723">
    <property type="term" value="F:RNA binding"/>
    <property type="evidence" value="ECO:0007005"/>
    <property type="project" value="UniProtKB"/>
</dbReference>
<dbReference type="GO" id="GO:0019843">
    <property type="term" value="F:rRNA binding"/>
    <property type="evidence" value="ECO:0000314"/>
    <property type="project" value="UniProtKB"/>
</dbReference>
<dbReference type="GO" id="GO:0048539">
    <property type="term" value="P:bone marrow development"/>
    <property type="evidence" value="ECO:0000315"/>
    <property type="project" value="UniProtKB"/>
</dbReference>
<dbReference type="GO" id="GO:0030282">
    <property type="term" value="P:bone mineralization"/>
    <property type="evidence" value="ECO:0000315"/>
    <property type="project" value="UniProtKB"/>
</dbReference>
<dbReference type="GO" id="GO:0042256">
    <property type="term" value="P:cytosolic ribosome assembly"/>
    <property type="evidence" value="ECO:0000314"/>
    <property type="project" value="UniProtKB"/>
</dbReference>
<dbReference type="GO" id="GO:0002244">
    <property type="term" value="P:hematopoietic progenitor cell differentiation"/>
    <property type="evidence" value="ECO:0000315"/>
    <property type="project" value="UniProtKB"/>
</dbReference>
<dbReference type="GO" id="GO:0001833">
    <property type="term" value="P:inner cell mass cell proliferation"/>
    <property type="evidence" value="ECO:0007669"/>
    <property type="project" value="Ensembl"/>
</dbReference>
<dbReference type="GO" id="GO:0030595">
    <property type="term" value="P:leukocyte chemotaxis"/>
    <property type="evidence" value="ECO:0000314"/>
    <property type="project" value="UniProtKB"/>
</dbReference>
<dbReference type="GO" id="GO:0007052">
    <property type="term" value="P:mitotic spindle organization"/>
    <property type="evidence" value="ECO:0000314"/>
    <property type="project" value="UniProtKB"/>
</dbReference>
<dbReference type="GO" id="GO:0006364">
    <property type="term" value="P:rRNA processing"/>
    <property type="evidence" value="ECO:0000315"/>
    <property type="project" value="UniProtKB"/>
</dbReference>
<dbReference type="FunFam" id="3.30.70.240:FF:000009">
    <property type="entry name" value="SBDS ribosome maturation factor"/>
    <property type="match status" value="1"/>
</dbReference>
<dbReference type="FunFam" id="1.10.10.900:FF:000001">
    <property type="entry name" value="SBDS, ribosome maturation factor"/>
    <property type="match status" value="1"/>
</dbReference>
<dbReference type="FunFam" id="3.30.1250.10:FF:000001">
    <property type="entry name" value="SBDS, ribosome maturation factor"/>
    <property type="match status" value="1"/>
</dbReference>
<dbReference type="Gene3D" id="3.30.70.240">
    <property type="match status" value="1"/>
</dbReference>
<dbReference type="Gene3D" id="3.30.1250.10">
    <property type="entry name" value="Ribosome maturation protein SBDS, N-terminal domain"/>
    <property type="match status" value="1"/>
</dbReference>
<dbReference type="Gene3D" id="1.10.10.900">
    <property type="entry name" value="SBDS protein C-terminal domain, subdomain 1"/>
    <property type="match status" value="1"/>
</dbReference>
<dbReference type="InterPro" id="IPR018023">
    <property type="entry name" value="Ribosome_mat_SBDS_CS"/>
</dbReference>
<dbReference type="InterPro" id="IPR036786">
    <property type="entry name" value="Ribosome_mat_SBDS_N_sf"/>
</dbReference>
<dbReference type="InterPro" id="IPR002140">
    <property type="entry name" value="Sdo1/SBDS"/>
</dbReference>
<dbReference type="InterPro" id="IPR039100">
    <property type="entry name" value="Sdo1/SBDS-like"/>
</dbReference>
<dbReference type="InterPro" id="IPR046928">
    <property type="entry name" value="SDO1/SBDS_C"/>
</dbReference>
<dbReference type="InterPro" id="IPR018978">
    <property type="entry name" value="SDO1/SBDS_central"/>
</dbReference>
<dbReference type="InterPro" id="IPR037188">
    <property type="entry name" value="Sdo1/SBDS_central_sf"/>
</dbReference>
<dbReference type="InterPro" id="IPR019783">
    <property type="entry name" value="SDO1/SBDS_N"/>
</dbReference>
<dbReference type="NCBIfam" id="TIGR00291">
    <property type="entry name" value="RNA_SBDS"/>
    <property type="match status" value="1"/>
</dbReference>
<dbReference type="PANTHER" id="PTHR10927">
    <property type="entry name" value="RIBOSOME MATURATION PROTEIN SBDS"/>
    <property type="match status" value="1"/>
</dbReference>
<dbReference type="PANTHER" id="PTHR10927:SF6">
    <property type="entry name" value="RIBOSOME MATURATION PROTEIN SBDS"/>
    <property type="match status" value="1"/>
</dbReference>
<dbReference type="Pfam" id="PF20268">
    <property type="entry name" value="SBDS_C"/>
    <property type="match status" value="1"/>
</dbReference>
<dbReference type="Pfam" id="PF09377">
    <property type="entry name" value="SBDS_domain_II"/>
    <property type="match status" value="1"/>
</dbReference>
<dbReference type="Pfam" id="PF01172">
    <property type="entry name" value="SBDS_N"/>
    <property type="match status" value="1"/>
</dbReference>
<dbReference type="SUPFAM" id="SSF89895">
    <property type="entry name" value="FYSH domain"/>
    <property type="match status" value="1"/>
</dbReference>
<dbReference type="SUPFAM" id="SSF109728">
    <property type="entry name" value="Hypothetical protein AF0491, middle domain"/>
    <property type="match status" value="1"/>
</dbReference>
<dbReference type="PROSITE" id="PS01267">
    <property type="entry name" value="UPF0023"/>
    <property type="match status" value="1"/>
</dbReference>
<evidence type="ECO:0000269" key="1">
    <source>
    </source>
</evidence>
<evidence type="ECO:0000269" key="2">
    <source>
    </source>
</evidence>
<evidence type="ECO:0000269" key="3">
    <source>
    </source>
</evidence>
<evidence type="ECO:0000269" key="4">
    <source>
    </source>
</evidence>
<evidence type="ECO:0000269" key="5">
    <source>
    </source>
</evidence>
<evidence type="ECO:0000269" key="6">
    <source>
    </source>
</evidence>
<evidence type="ECO:0000269" key="7">
    <source>
    </source>
</evidence>
<evidence type="ECO:0000269" key="8">
    <source>
    </source>
</evidence>
<evidence type="ECO:0000269" key="9">
    <source>
    </source>
</evidence>
<evidence type="ECO:0000269" key="10">
    <source>
    </source>
</evidence>
<evidence type="ECO:0000269" key="11">
    <source ref="6"/>
</evidence>
<evidence type="ECO:0000305" key="12"/>
<evidence type="ECO:0007744" key="13">
    <source>
    </source>
</evidence>
<evidence type="ECO:0007744" key="14">
    <source>
    </source>
</evidence>
<evidence type="ECO:0007829" key="15">
    <source>
        <dbReference type="PDB" id="2KDO"/>
    </source>
</evidence>
<evidence type="ECO:0007829" key="16">
    <source>
        <dbReference type="PDB" id="2L9N"/>
    </source>
</evidence>
<evidence type="ECO:0007829" key="17">
    <source>
        <dbReference type="PDB" id="5AN9"/>
    </source>
</evidence>